<accession>B6ENG5</accession>
<gene>
    <name evidence="1" type="primary">deoB</name>
    <name type="ordered locus">VSAL_I0621</name>
</gene>
<feature type="chain" id="PRO_1000133055" description="Phosphopentomutase">
    <location>
        <begin position="1"/>
        <end position="406"/>
    </location>
</feature>
<feature type="binding site" evidence="1">
    <location>
        <position position="10"/>
    </location>
    <ligand>
        <name>Mn(2+)</name>
        <dbReference type="ChEBI" id="CHEBI:29035"/>
        <label>1</label>
    </ligand>
</feature>
<feature type="binding site" evidence="1">
    <location>
        <position position="305"/>
    </location>
    <ligand>
        <name>Mn(2+)</name>
        <dbReference type="ChEBI" id="CHEBI:29035"/>
        <label>2</label>
    </ligand>
</feature>
<feature type="binding site" evidence="1">
    <location>
        <position position="310"/>
    </location>
    <ligand>
        <name>Mn(2+)</name>
        <dbReference type="ChEBI" id="CHEBI:29035"/>
        <label>2</label>
    </ligand>
</feature>
<feature type="binding site" evidence="1">
    <location>
        <position position="346"/>
    </location>
    <ligand>
        <name>Mn(2+)</name>
        <dbReference type="ChEBI" id="CHEBI:29035"/>
        <label>1</label>
    </ligand>
</feature>
<feature type="binding site" evidence="1">
    <location>
        <position position="347"/>
    </location>
    <ligand>
        <name>Mn(2+)</name>
        <dbReference type="ChEBI" id="CHEBI:29035"/>
        <label>1</label>
    </ligand>
</feature>
<feature type="binding site" evidence="1">
    <location>
        <position position="358"/>
    </location>
    <ligand>
        <name>Mn(2+)</name>
        <dbReference type="ChEBI" id="CHEBI:29035"/>
        <label>2</label>
    </ligand>
</feature>
<reference key="1">
    <citation type="journal article" date="2008" name="BMC Genomics">
        <title>The genome sequence of the fish pathogen Aliivibrio salmonicida strain LFI1238 shows extensive evidence of gene decay.</title>
        <authorList>
            <person name="Hjerde E."/>
            <person name="Lorentzen M.S."/>
            <person name="Holden M.T."/>
            <person name="Seeger K."/>
            <person name="Paulsen S."/>
            <person name="Bason N."/>
            <person name="Churcher C."/>
            <person name="Harris D."/>
            <person name="Norbertczak H."/>
            <person name="Quail M.A."/>
            <person name="Sanders S."/>
            <person name="Thurston S."/>
            <person name="Parkhill J."/>
            <person name="Willassen N.P."/>
            <person name="Thomson N.R."/>
        </authorList>
    </citation>
    <scope>NUCLEOTIDE SEQUENCE [LARGE SCALE GENOMIC DNA]</scope>
    <source>
        <strain>LFI1238</strain>
    </source>
</reference>
<keyword id="KW-0963">Cytoplasm</keyword>
<keyword id="KW-0413">Isomerase</keyword>
<keyword id="KW-0464">Manganese</keyword>
<keyword id="KW-0479">Metal-binding</keyword>
<sequence>MKRAIILVLDSFGIGAAGDAEKFGDVGSDTMGHIAEQCDKGLADNGNRKGPLTLPNLSKLGLAMAGKESTGKLAAGLDADAEIIGAYGHAAELSSGKDTPSGHWEIAGVPVLFDWGYFSDKENSFPKELTDRILARANLSGYLGNCHASGTQVLDDLGEEHMKTGMPIFYTSADSVFQIACHEETFGLDNLLTLCQIAREELEDYNIGRVIARPFIGAGKGQFERTGNRRDLSLEPPAITVLQKLVEEKNGHVHSIGKISDIYAGCGITQKTKATGIPALFDATKEAITAASDNTIVFTNFVDFDSAYGHRRDVAGYAAALEYFDGRLPEIMEMLQEDDILILTADHGCDPTWPGTDHTREHIPVLVYGHKVPAGSLGLRDTFADIGQTLAEYFEISDMEYGKSFL</sequence>
<dbReference type="EC" id="5.4.2.7" evidence="1"/>
<dbReference type="EMBL" id="FM178379">
    <property type="protein sequence ID" value="CAQ78306.1"/>
    <property type="molecule type" value="Genomic_DNA"/>
</dbReference>
<dbReference type="RefSeq" id="WP_012549429.1">
    <property type="nucleotide sequence ID" value="NC_011312.1"/>
</dbReference>
<dbReference type="SMR" id="B6ENG5"/>
<dbReference type="KEGG" id="vsa:VSAL_I0621"/>
<dbReference type="eggNOG" id="COG1015">
    <property type="taxonomic scope" value="Bacteria"/>
</dbReference>
<dbReference type="HOGENOM" id="CLU_053861_0_0_6"/>
<dbReference type="UniPathway" id="UPA00002">
    <property type="reaction ID" value="UER00467"/>
</dbReference>
<dbReference type="Proteomes" id="UP000001730">
    <property type="component" value="Chromosome 1"/>
</dbReference>
<dbReference type="GO" id="GO:0005829">
    <property type="term" value="C:cytosol"/>
    <property type="evidence" value="ECO:0007669"/>
    <property type="project" value="TreeGrafter"/>
</dbReference>
<dbReference type="GO" id="GO:0000287">
    <property type="term" value="F:magnesium ion binding"/>
    <property type="evidence" value="ECO:0007669"/>
    <property type="project" value="InterPro"/>
</dbReference>
<dbReference type="GO" id="GO:0030145">
    <property type="term" value="F:manganese ion binding"/>
    <property type="evidence" value="ECO:0007669"/>
    <property type="project" value="UniProtKB-UniRule"/>
</dbReference>
<dbReference type="GO" id="GO:0008973">
    <property type="term" value="F:phosphopentomutase activity"/>
    <property type="evidence" value="ECO:0007669"/>
    <property type="project" value="UniProtKB-UniRule"/>
</dbReference>
<dbReference type="GO" id="GO:0006018">
    <property type="term" value="P:2-deoxyribose 1-phosphate catabolic process"/>
    <property type="evidence" value="ECO:0007669"/>
    <property type="project" value="UniProtKB-UniRule"/>
</dbReference>
<dbReference type="GO" id="GO:0006015">
    <property type="term" value="P:5-phosphoribose 1-diphosphate biosynthetic process"/>
    <property type="evidence" value="ECO:0007669"/>
    <property type="project" value="UniProtKB-UniPathway"/>
</dbReference>
<dbReference type="GO" id="GO:0043094">
    <property type="term" value="P:metabolic compound salvage"/>
    <property type="evidence" value="ECO:0007669"/>
    <property type="project" value="InterPro"/>
</dbReference>
<dbReference type="GO" id="GO:0009117">
    <property type="term" value="P:nucleotide metabolic process"/>
    <property type="evidence" value="ECO:0007669"/>
    <property type="project" value="InterPro"/>
</dbReference>
<dbReference type="CDD" id="cd16009">
    <property type="entry name" value="PPM"/>
    <property type="match status" value="1"/>
</dbReference>
<dbReference type="FunFam" id="3.30.70.1250:FF:000001">
    <property type="entry name" value="Phosphopentomutase"/>
    <property type="match status" value="1"/>
</dbReference>
<dbReference type="Gene3D" id="3.40.720.10">
    <property type="entry name" value="Alkaline Phosphatase, subunit A"/>
    <property type="match status" value="1"/>
</dbReference>
<dbReference type="Gene3D" id="3.30.70.1250">
    <property type="entry name" value="Phosphopentomutase"/>
    <property type="match status" value="1"/>
</dbReference>
<dbReference type="HAMAP" id="MF_00740">
    <property type="entry name" value="Phosphopentomut"/>
    <property type="match status" value="1"/>
</dbReference>
<dbReference type="InterPro" id="IPR017850">
    <property type="entry name" value="Alkaline_phosphatase_core_sf"/>
</dbReference>
<dbReference type="InterPro" id="IPR010045">
    <property type="entry name" value="DeoB"/>
</dbReference>
<dbReference type="InterPro" id="IPR006124">
    <property type="entry name" value="Metalloenzyme"/>
</dbReference>
<dbReference type="InterPro" id="IPR024052">
    <property type="entry name" value="Phosphopentomutase_DeoB_cap_sf"/>
</dbReference>
<dbReference type="NCBIfam" id="TIGR01696">
    <property type="entry name" value="deoB"/>
    <property type="match status" value="1"/>
</dbReference>
<dbReference type="NCBIfam" id="NF003766">
    <property type="entry name" value="PRK05362.1"/>
    <property type="match status" value="1"/>
</dbReference>
<dbReference type="PANTHER" id="PTHR21110">
    <property type="entry name" value="PHOSPHOPENTOMUTASE"/>
    <property type="match status" value="1"/>
</dbReference>
<dbReference type="PANTHER" id="PTHR21110:SF0">
    <property type="entry name" value="PHOSPHOPENTOMUTASE"/>
    <property type="match status" value="1"/>
</dbReference>
<dbReference type="Pfam" id="PF01676">
    <property type="entry name" value="Metalloenzyme"/>
    <property type="match status" value="1"/>
</dbReference>
<dbReference type="PIRSF" id="PIRSF001491">
    <property type="entry name" value="Ppentomutase"/>
    <property type="match status" value="1"/>
</dbReference>
<dbReference type="SUPFAM" id="SSF53649">
    <property type="entry name" value="Alkaline phosphatase-like"/>
    <property type="match status" value="1"/>
</dbReference>
<dbReference type="SUPFAM" id="SSF143856">
    <property type="entry name" value="DeoB insert domain-like"/>
    <property type="match status" value="1"/>
</dbReference>
<organism>
    <name type="scientific">Aliivibrio salmonicida (strain LFI1238)</name>
    <name type="common">Vibrio salmonicida (strain LFI1238)</name>
    <dbReference type="NCBI Taxonomy" id="316275"/>
    <lineage>
        <taxon>Bacteria</taxon>
        <taxon>Pseudomonadati</taxon>
        <taxon>Pseudomonadota</taxon>
        <taxon>Gammaproteobacteria</taxon>
        <taxon>Vibrionales</taxon>
        <taxon>Vibrionaceae</taxon>
        <taxon>Aliivibrio</taxon>
    </lineage>
</organism>
<comment type="function">
    <text evidence="1">Isomerase that catalyzes the conversion of deoxy-ribose 1-phosphate (dRib-1-P) and ribose 1-phosphate (Rib-1-P) to deoxy-ribose 5-phosphate (dRib-5-P) and ribose 5-phosphate (Rib-5-P), respectively.</text>
</comment>
<comment type="catalytic activity">
    <reaction evidence="1">
        <text>2-deoxy-alpha-D-ribose 1-phosphate = 2-deoxy-D-ribose 5-phosphate</text>
        <dbReference type="Rhea" id="RHEA:27658"/>
        <dbReference type="ChEBI" id="CHEBI:57259"/>
        <dbReference type="ChEBI" id="CHEBI:62877"/>
        <dbReference type="EC" id="5.4.2.7"/>
    </reaction>
</comment>
<comment type="catalytic activity">
    <reaction evidence="1">
        <text>alpha-D-ribose 1-phosphate = D-ribose 5-phosphate</text>
        <dbReference type="Rhea" id="RHEA:18793"/>
        <dbReference type="ChEBI" id="CHEBI:57720"/>
        <dbReference type="ChEBI" id="CHEBI:78346"/>
        <dbReference type="EC" id="5.4.2.7"/>
    </reaction>
</comment>
<comment type="cofactor">
    <cofactor evidence="1">
        <name>Mn(2+)</name>
        <dbReference type="ChEBI" id="CHEBI:29035"/>
    </cofactor>
    <text evidence="1">Binds 2 manganese ions.</text>
</comment>
<comment type="pathway">
    <text evidence="1">Carbohydrate degradation; 2-deoxy-D-ribose 1-phosphate degradation; D-glyceraldehyde 3-phosphate and acetaldehyde from 2-deoxy-alpha-D-ribose 1-phosphate: step 1/2.</text>
</comment>
<comment type="subcellular location">
    <subcellularLocation>
        <location evidence="1">Cytoplasm</location>
    </subcellularLocation>
</comment>
<comment type="similarity">
    <text evidence="1">Belongs to the phosphopentomutase family.</text>
</comment>
<evidence type="ECO:0000255" key="1">
    <source>
        <dbReference type="HAMAP-Rule" id="MF_00740"/>
    </source>
</evidence>
<protein>
    <recommendedName>
        <fullName evidence="1">Phosphopentomutase</fullName>
        <ecNumber evidence="1">5.4.2.7</ecNumber>
    </recommendedName>
    <alternativeName>
        <fullName evidence="1">Phosphodeoxyribomutase</fullName>
    </alternativeName>
</protein>
<proteinExistence type="inferred from homology"/>
<name>DEOB_ALISL</name>